<keyword id="KW-0021">Allosteric enzyme</keyword>
<keyword id="KW-0028">Amino-acid biosynthesis</keyword>
<keyword id="KW-0057">Aromatic amino acid biosynthesis</keyword>
<keyword id="KW-0963">Cytoplasm</keyword>
<keyword id="KW-0413">Isomerase</keyword>
<keyword id="KW-0584">Phenylalanine biosynthesis</keyword>
<keyword id="KW-1185">Reference proteome</keyword>
<keyword id="KW-0827">Tyrosine biosynthesis</keyword>
<organism evidence="9">
    <name type="scientific">Emericella nidulans (strain FGSC A4 / ATCC 38163 / CBS 112.46 / NRRL 194 / M139)</name>
    <name type="common">Aspergillus nidulans</name>
    <dbReference type="NCBI Taxonomy" id="227321"/>
    <lineage>
        <taxon>Eukaryota</taxon>
        <taxon>Fungi</taxon>
        <taxon>Dikarya</taxon>
        <taxon>Ascomycota</taxon>
        <taxon>Pezizomycotina</taxon>
        <taxon>Eurotiomycetes</taxon>
        <taxon>Eurotiomycetidae</taxon>
        <taxon>Eurotiales</taxon>
        <taxon>Aspergillaceae</taxon>
        <taxon>Aspergillus</taxon>
        <taxon>Aspergillus subgen. Nidulantes</taxon>
    </lineage>
</organism>
<protein>
    <recommendedName>
        <fullName evidence="4">Chorismate mutase</fullName>
        <shortName evidence="5">CM</shortName>
        <ecNumber evidence="3">5.4.99.5</ecNumber>
    </recommendedName>
    <alternativeName>
        <fullName evidence="4">AnCM</fullName>
    </alternativeName>
</protein>
<feature type="chain" id="PRO_0000452012" description="Chorismate mutase">
    <location>
        <begin position="1"/>
        <end position="267"/>
    </location>
</feature>
<feature type="domain" description="Chorismate mutase" evidence="2">
    <location>
        <begin position="7"/>
        <end position="262"/>
    </location>
</feature>
<feature type="binding site" evidence="1">
    <location>
        <position position="77"/>
    </location>
    <ligand>
        <name>L-tyrosine</name>
        <dbReference type="ChEBI" id="CHEBI:58315"/>
        <note>allosteric effector</note>
    </ligand>
</feature>
<feature type="binding site" evidence="1">
    <location>
        <position position="78"/>
    </location>
    <ligand>
        <name>L-tyrosine</name>
        <dbReference type="ChEBI" id="CHEBI:58315"/>
        <note>allosteric effector</note>
    </ligand>
</feature>
<feature type="binding site" evidence="1">
    <location>
        <position position="145"/>
    </location>
    <ligand>
        <name>L-tryptophan</name>
        <dbReference type="ChEBI" id="CHEBI:57912"/>
        <note>allosteric effector</note>
    </ligand>
</feature>
<feature type="binding site" evidence="1">
    <location>
        <position position="145"/>
    </location>
    <ligand>
        <name>L-tyrosine</name>
        <dbReference type="ChEBI" id="CHEBI:58315"/>
        <note>allosteric effector</note>
    </ligand>
</feature>
<feature type="binding site" evidence="1">
    <location>
        <position position="147"/>
    </location>
    <ligand>
        <name>L-tryptophan</name>
        <dbReference type="ChEBI" id="CHEBI:57912"/>
        <note>allosteric effector</note>
    </ligand>
</feature>
<feature type="binding site" evidence="1">
    <location>
        <position position="147"/>
    </location>
    <ligand>
        <name>L-tyrosine</name>
        <dbReference type="ChEBI" id="CHEBI:58315"/>
        <note>allosteric effector</note>
    </ligand>
</feature>
<feature type="binding site" evidence="1">
    <location>
        <position position="148"/>
    </location>
    <ligand>
        <name>L-tryptophan</name>
        <dbReference type="ChEBI" id="CHEBI:57912"/>
        <note>allosteric effector</note>
    </ligand>
</feature>
<feature type="binding site" evidence="1">
    <location>
        <position position="148"/>
    </location>
    <ligand>
        <name>L-tyrosine</name>
        <dbReference type="ChEBI" id="CHEBI:58315"/>
        <note>allosteric effector</note>
    </ligand>
</feature>
<feature type="binding site" evidence="1">
    <location>
        <position position="151"/>
    </location>
    <ligand>
        <name>L-tyrosine</name>
        <dbReference type="ChEBI" id="CHEBI:58315"/>
        <note>allosteric effector</note>
    </ligand>
</feature>
<feature type="mutagenesis site" description="Decreases activity regulation by tyrosine and tryptophan." evidence="3">
    <original>D</original>
    <variation>I</variation>
    <variation>T</variation>
    <location>
        <position position="233"/>
    </location>
</feature>
<name>CHMU_EMENI</name>
<accession>G5EB37</accession>
<accession>A0A1U8QN24</accession>
<accession>C8V2P3</accession>
<accession>Q5AXW4</accession>
<accession>Q9Y7B2</accession>
<sequence length="267" mass="30661">MDTAIDLSDASKALDLANIRFQLIRLEDTITFHLIERVQFPLNKTIYIPGGVKIPNEQISLMDYLLRETERLQSRVRRYQSPDEYPFFPSALEKPILQPLDYPKILHDNDVNVNETIKTRYVQDILPAICPQFGGREDRGETQENYGSAATCDVSCLQALSRRIHFGKFVAESKFQKETEKFVALIKAGDRKEIDEAITDAKVEQKVLERLALKAKTYGTDPGFPEQSGPKIDVQAVQDMYKEYVIPLTKVVEVEYLMQRLKGTQWE</sequence>
<comment type="function">
    <text evidence="1 3">Catalyzes the Claisen rearrangement of chorismate to prephenate (PubMed:10428795). Acts at the first branch point in the aromatic amino acid pathway where it steers biosynthesis towards phenylalanine and tyrosine, and away from tryptophan (By similarity).</text>
</comment>
<comment type="catalytic activity">
    <reaction evidence="3">
        <text>chorismate = prephenate</text>
        <dbReference type="Rhea" id="RHEA:13897"/>
        <dbReference type="ChEBI" id="CHEBI:29748"/>
        <dbReference type="ChEBI" id="CHEBI:29934"/>
        <dbReference type="EC" id="5.4.99.5"/>
    </reaction>
    <physiologicalReaction direction="left-to-right" evidence="3">
        <dbReference type="Rhea" id="RHEA:13898"/>
    </physiologicalReaction>
</comment>
<comment type="activity regulation">
    <text evidence="1 3">Each dimer has two allosteric binding sites that can bind the regulatory effectors tryptophan or tyrosine (PubMed:10428795). Can bind either one tryptophan or one tyrosine, two tryptophan or two tyrosine or one tryptophan and one tyrosine, which differentially affect the catalytic activity (By similarity). Activated by tryptophan and subject to feedback inhibition by tyrosine (PubMed:10428795). In the presence of both tryptophan and tyrosine, the enzyme is in the activated state (By similarity).</text>
</comment>
<comment type="biophysicochemical properties">
    <kinetics>
        <KM>0.1 mM for chorismate (in the presence of 5 uM tryptophan and at 30 degrees Celsius)</KM>
        <text evidence="3">kcat is 82 sec(-1) with chorismate as substrate (at 30 degrees Celsius). kcat is 92 sec(-1) with chorismate as substrate (in the presence of 5 uM tryptophan and at 30 degrees Celsius). kcat is 82.5 sec(-1) with chorismate as substrate (in the presence of 50 uM tyrosine at 30 degrees Celsius).</text>
    </kinetics>
    <phDependence>
        <text evidence="3">Optimum pH is 5.9 in the absence of effectors. Optimum pH is 7.1 in the presence of tryptophan. Optimum pH is 5.4 in the presence of tyrosine. Tryptophan broadens the pH range of detectable catalytic activity.</text>
    </phDependence>
</comment>
<comment type="pathway">
    <text evidence="6">Metabolic intermediate biosynthesis; prephenate biosynthesis; prephenate from chorismate: step 1/1.</text>
</comment>
<comment type="subunit">
    <text evidence="3">Homodimer.</text>
</comment>
<comment type="subcellular location">
    <subcellularLocation>
        <location evidence="1">Cytoplasm</location>
    </subcellularLocation>
</comment>
<comment type="induction">
    <text evidence="3">Not induced by histidine starvation.</text>
</comment>
<reference evidence="7" key="1">
    <citation type="journal article" date="1999" name="J. Biol. Chem.">
        <title>The aroC gene of Aspergillus nidulans codes for a monofunctional, allosterically regulated chorismate mutase.</title>
        <authorList>
            <person name="Krappmann S."/>
            <person name="Helmstaedt K."/>
            <person name="Gerstberger T."/>
            <person name="Eckert S."/>
            <person name="Hoffmann B."/>
            <person name="Hoppert M."/>
            <person name="Schnappauf G."/>
            <person name="Braus G.H."/>
        </authorList>
    </citation>
    <scope>NUCLEOTIDE SEQUENCE [GENOMIC DNA]</scope>
    <scope>FUNCTION</scope>
    <scope>CATALYTIC ACTIVITY</scope>
    <scope>ACTIVITY REGULATION</scope>
    <scope>BIOPHYSICOCHEMICAL PROPERTIES</scope>
    <scope>PATHWAY</scope>
    <scope>SUBUNIT</scope>
    <scope>INDUCTION</scope>
    <scope>MUTAGENESIS OF ASP-233</scope>
    <source>
        <strain evidence="4">FGSC A4 / ATCC 38163 / CBS 112.46 / NRRL 194 / M139</strain>
    </source>
</reference>
<reference evidence="9" key="2">
    <citation type="journal article" date="2005" name="Nature">
        <title>Sequencing of Aspergillus nidulans and comparative analysis with A. fumigatus and A. oryzae.</title>
        <authorList>
            <person name="Galagan J.E."/>
            <person name="Calvo S.E."/>
            <person name="Cuomo C."/>
            <person name="Ma L.-J."/>
            <person name="Wortman J.R."/>
            <person name="Batzoglou S."/>
            <person name="Lee S.-I."/>
            <person name="Bastuerkmen M."/>
            <person name="Spevak C.C."/>
            <person name="Clutterbuck J."/>
            <person name="Kapitonov V."/>
            <person name="Jurka J."/>
            <person name="Scazzocchio C."/>
            <person name="Farman M.L."/>
            <person name="Butler J."/>
            <person name="Purcell S."/>
            <person name="Harris S."/>
            <person name="Braus G.H."/>
            <person name="Draht O."/>
            <person name="Busch S."/>
            <person name="D'Enfert C."/>
            <person name="Bouchier C."/>
            <person name="Goldman G.H."/>
            <person name="Bell-Pedersen D."/>
            <person name="Griffiths-Jones S."/>
            <person name="Doonan J.H."/>
            <person name="Yu J."/>
            <person name="Vienken K."/>
            <person name="Pain A."/>
            <person name="Freitag M."/>
            <person name="Selker E.U."/>
            <person name="Archer D.B."/>
            <person name="Penalva M.A."/>
            <person name="Oakley B.R."/>
            <person name="Momany M."/>
            <person name="Tanaka T."/>
            <person name="Kumagai T."/>
            <person name="Asai K."/>
            <person name="Machida M."/>
            <person name="Nierman W.C."/>
            <person name="Denning D.W."/>
            <person name="Caddick M.X."/>
            <person name="Hynes M."/>
            <person name="Paoletti M."/>
            <person name="Fischer R."/>
            <person name="Miller B.L."/>
            <person name="Dyer P.S."/>
            <person name="Sachs M.S."/>
            <person name="Osmani S.A."/>
            <person name="Birren B.W."/>
        </authorList>
    </citation>
    <scope>NUCLEOTIDE SEQUENCE [LARGE SCALE GENOMIC DNA]</scope>
    <source>
        <strain evidence="9">FGSC A4 / ATCC 38163 / CBS 112.46 / NRRL 194 / M139</strain>
    </source>
</reference>
<reference evidence="9" key="3">
    <citation type="journal article" date="2009" name="Fungal Genet. Biol.">
        <title>The 2008 update of the Aspergillus nidulans genome annotation: a community effort.</title>
        <authorList>
            <person name="Wortman J.R."/>
            <person name="Gilsenan J.M."/>
            <person name="Joardar V."/>
            <person name="Deegan J."/>
            <person name="Clutterbuck J."/>
            <person name="Andersen M.R."/>
            <person name="Archer D."/>
            <person name="Bencina M."/>
            <person name="Braus G."/>
            <person name="Coutinho P."/>
            <person name="von Dohren H."/>
            <person name="Doonan J."/>
            <person name="Driessen A.J."/>
            <person name="Durek P."/>
            <person name="Espeso E."/>
            <person name="Fekete E."/>
            <person name="Flipphi M."/>
            <person name="Estrada C.G."/>
            <person name="Geysens S."/>
            <person name="Goldman G."/>
            <person name="de Groot P.W."/>
            <person name="Hansen K."/>
            <person name="Harris S.D."/>
            <person name="Heinekamp T."/>
            <person name="Helmstaedt K."/>
            <person name="Henrissat B."/>
            <person name="Hofmann G."/>
            <person name="Homan T."/>
            <person name="Horio T."/>
            <person name="Horiuchi H."/>
            <person name="James S."/>
            <person name="Jones M."/>
            <person name="Karaffa L."/>
            <person name="Karanyi Z."/>
            <person name="Kato M."/>
            <person name="Keller N."/>
            <person name="Kelly D.E."/>
            <person name="Kiel J.A."/>
            <person name="Kim J.M."/>
            <person name="van der Klei I.J."/>
            <person name="Klis F.M."/>
            <person name="Kovalchuk A."/>
            <person name="Krasevec N."/>
            <person name="Kubicek C.P."/>
            <person name="Liu B."/>
            <person name="Maccabe A."/>
            <person name="Meyer V."/>
            <person name="Mirabito P."/>
            <person name="Miskei M."/>
            <person name="Mos M."/>
            <person name="Mullins J."/>
            <person name="Nelson D.R."/>
            <person name="Nielsen J."/>
            <person name="Oakley B.R."/>
            <person name="Osmani S.A."/>
            <person name="Pakula T."/>
            <person name="Paszewski A."/>
            <person name="Paulsen I."/>
            <person name="Pilsyk S."/>
            <person name="Pocsi I."/>
            <person name="Punt P.J."/>
            <person name="Ram A.F."/>
            <person name="Ren Q."/>
            <person name="Robellet X."/>
            <person name="Robson G."/>
            <person name="Seiboth B."/>
            <person name="van Solingen P."/>
            <person name="Specht T."/>
            <person name="Sun J."/>
            <person name="Taheri-Talesh N."/>
            <person name="Takeshita N."/>
            <person name="Ussery D."/>
            <person name="vanKuyk P.A."/>
            <person name="Visser H."/>
            <person name="van de Vondervoort P.J."/>
            <person name="de Vries R.P."/>
            <person name="Walton J."/>
            <person name="Xiang X."/>
            <person name="Xiong Y."/>
            <person name="Zeng A.P."/>
            <person name="Brandt B.W."/>
            <person name="Cornell M.J."/>
            <person name="van den Hondel C.A."/>
            <person name="Visser J."/>
            <person name="Oliver S.G."/>
            <person name="Turner G."/>
        </authorList>
    </citation>
    <scope>GENOME REANNOTATION</scope>
    <source>
        <strain evidence="9">FGSC A4 / ATCC 38163 / CBS 112.46 / NRRL 194 / M139</strain>
    </source>
</reference>
<dbReference type="EC" id="5.4.99.5" evidence="3"/>
<dbReference type="EMBL" id="AF133241">
    <property type="protein sequence ID" value="AAD30065.1"/>
    <property type="molecule type" value="Genomic_DNA"/>
</dbReference>
<dbReference type="EMBL" id="AACD01000113">
    <property type="protein sequence ID" value="EAA58265.1"/>
    <property type="molecule type" value="Genomic_DNA"/>
</dbReference>
<dbReference type="EMBL" id="BN001301">
    <property type="protein sequence ID" value="CBF71622.1"/>
    <property type="molecule type" value="Genomic_DNA"/>
</dbReference>
<dbReference type="RefSeq" id="XP_664470.1">
    <property type="nucleotide sequence ID" value="XM_659378.1"/>
</dbReference>
<dbReference type="SMR" id="G5EB37"/>
<dbReference type="FunCoup" id="G5EB37">
    <property type="interactions" value="161"/>
</dbReference>
<dbReference type="STRING" id="227321.G5EB37"/>
<dbReference type="EnsemblFungi" id="CBF71622">
    <property type="protein sequence ID" value="CBF71622"/>
    <property type="gene ID" value="ANIA_06866"/>
</dbReference>
<dbReference type="GeneID" id="2870568"/>
<dbReference type="KEGG" id="ani:ANIA_06866"/>
<dbReference type="VEuPathDB" id="FungiDB:AN6866"/>
<dbReference type="eggNOG" id="KOG0795">
    <property type="taxonomic scope" value="Eukaryota"/>
</dbReference>
<dbReference type="HOGENOM" id="CLU_057757_0_0_1"/>
<dbReference type="InParanoid" id="G5EB37"/>
<dbReference type="OMA" id="ATCDVNC"/>
<dbReference type="OrthoDB" id="191918at2759"/>
<dbReference type="BRENDA" id="5.4.99.5">
    <property type="organism ID" value="517"/>
</dbReference>
<dbReference type="UniPathway" id="UPA00120">
    <property type="reaction ID" value="UER00203"/>
</dbReference>
<dbReference type="Proteomes" id="UP000000560">
    <property type="component" value="Chromosome I"/>
</dbReference>
<dbReference type="GO" id="GO:0005737">
    <property type="term" value="C:cytoplasm"/>
    <property type="evidence" value="ECO:0000318"/>
    <property type="project" value="GO_Central"/>
</dbReference>
<dbReference type="GO" id="GO:0005634">
    <property type="term" value="C:nucleus"/>
    <property type="evidence" value="ECO:0007669"/>
    <property type="project" value="EnsemblFungi"/>
</dbReference>
<dbReference type="GO" id="GO:0004106">
    <property type="term" value="F:chorismate mutase activity"/>
    <property type="evidence" value="ECO:0000314"/>
    <property type="project" value="AspGD"/>
</dbReference>
<dbReference type="GO" id="GO:0072545">
    <property type="term" value="F:L-tyrosine binding"/>
    <property type="evidence" value="ECO:0007669"/>
    <property type="project" value="EnsemblFungi"/>
</dbReference>
<dbReference type="GO" id="GO:0120284">
    <property type="term" value="F:tryptophan binding"/>
    <property type="evidence" value="ECO:0007669"/>
    <property type="project" value="EnsemblFungi"/>
</dbReference>
<dbReference type="GO" id="GO:0009073">
    <property type="term" value="P:aromatic amino acid family biosynthetic process"/>
    <property type="evidence" value="ECO:0000315"/>
    <property type="project" value="AspGD"/>
</dbReference>
<dbReference type="GO" id="GO:0046417">
    <property type="term" value="P:chorismate metabolic process"/>
    <property type="evidence" value="ECO:0000314"/>
    <property type="project" value="UniProtKB"/>
</dbReference>
<dbReference type="GO" id="GO:0009094">
    <property type="term" value="P:L-phenylalanine biosynthetic process"/>
    <property type="evidence" value="ECO:0000266"/>
    <property type="project" value="UniProtKB"/>
</dbReference>
<dbReference type="GO" id="GO:0000909">
    <property type="term" value="P:sporocarp development involved in sexual reproduction"/>
    <property type="evidence" value="ECO:0000315"/>
    <property type="project" value="AspGD"/>
</dbReference>
<dbReference type="GO" id="GO:0006571">
    <property type="term" value="P:tyrosine biosynthetic process"/>
    <property type="evidence" value="ECO:0000266"/>
    <property type="project" value="UniProtKB"/>
</dbReference>
<dbReference type="FunFam" id="1.10.590.10:FF:000002">
    <property type="entry name" value="Chorismate mutase"/>
    <property type="match status" value="1"/>
</dbReference>
<dbReference type="Gene3D" id="1.10.590.10">
    <property type="entry name" value="Chorismate mutase, AroQ class superfamily, eukaryotic"/>
    <property type="match status" value="1"/>
</dbReference>
<dbReference type="InterPro" id="IPR036263">
    <property type="entry name" value="Chorismate_II_sf"/>
</dbReference>
<dbReference type="InterPro" id="IPR008238">
    <property type="entry name" value="Chorismate_mutase_AroQ_euk"/>
</dbReference>
<dbReference type="InterPro" id="IPR037039">
    <property type="entry name" value="CM_AroQ_sf_eucaryotic"/>
</dbReference>
<dbReference type="InterPro" id="IPR002701">
    <property type="entry name" value="CM_II_prokaryot"/>
</dbReference>
<dbReference type="NCBIfam" id="TIGR01802">
    <property type="entry name" value="CM_pl-yst"/>
    <property type="match status" value="1"/>
</dbReference>
<dbReference type="PANTHER" id="PTHR21145">
    <property type="entry name" value="CHORISMATE MUTASE"/>
    <property type="match status" value="1"/>
</dbReference>
<dbReference type="PANTHER" id="PTHR21145:SF12">
    <property type="entry name" value="CHORISMATE MUTASE"/>
    <property type="match status" value="1"/>
</dbReference>
<dbReference type="Pfam" id="PF01817">
    <property type="entry name" value="CM_2"/>
    <property type="match status" value="1"/>
</dbReference>
<dbReference type="PIRSF" id="PIRSF017318">
    <property type="entry name" value="Chor_mut_AroQ_eu"/>
    <property type="match status" value="1"/>
</dbReference>
<dbReference type="SUPFAM" id="SSF48600">
    <property type="entry name" value="Chorismate mutase II"/>
    <property type="match status" value="1"/>
</dbReference>
<dbReference type="PROSITE" id="PS51169">
    <property type="entry name" value="CHORISMATE_MUT_3"/>
    <property type="match status" value="1"/>
</dbReference>
<evidence type="ECO:0000250" key="1">
    <source>
        <dbReference type="UniProtKB" id="P32178"/>
    </source>
</evidence>
<evidence type="ECO:0000255" key="2">
    <source>
        <dbReference type="PROSITE-ProRule" id="PRU00516"/>
    </source>
</evidence>
<evidence type="ECO:0000269" key="3">
    <source>
    </source>
</evidence>
<evidence type="ECO:0000303" key="4">
    <source>
    </source>
</evidence>
<evidence type="ECO:0000305" key="5"/>
<evidence type="ECO:0000305" key="6">
    <source>
    </source>
</evidence>
<evidence type="ECO:0000312" key="7">
    <source>
        <dbReference type="EMBL" id="AAD30065.1"/>
    </source>
</evidence>
<evidence type="ECO:0000312" key="8">
    <source>
        <dbReference type="EMBL" id="CBF71622.1"/>
    </source>
</evidence>
<evidence type="ECO:0000312" key="9">
    <source>
        <dbReference type="Proteomes" id="UP000000560"/>
    </source>
</evidence>
<proteinExistence type="evidence at protein level"/>
<gene>
    <name evidence="4" type="primary">aroC</name>
    <name evidence="8" type="ORF">ANIA_06866</name>
</gene>